<protein>
    <recommendedName>
        <fullName evidence="6">Subtilisin-like protease SBT1.6</fullName>
        <ecNumber evidence="7">3.4.21.-</ecNumber>
    </recommendedName>
    <alternativeName>
        <fullName evidence="6">Subtilase subfamily 1 member 6</fullName>
        <shortName evidence="6">AtSBT1.6</shortName>
    </alternativeName>
    <alternativeName>
        <fullName evidence="5">Subtilisin-like serine protease 2</fullName>
        <shortName evidence="5">At-SLP2</shortName>
    </alternativeName>
</protein>
<keyword id="KW-0325">Glycoprotein</keyword>
<keyword id="KW-0378">Hydrolase</keyword>
<keyword id="KW-0645">Protease</keyword>
<keyword id="KW-1185">Reference proteome</keyword>
<keyword id="KW-0720">Serine protease</keyword>
<keyword id="KW-0732">Signal</keyword>
<dbReference type="EC" id="3.4.21.-" evidence="7"/>
<dbReference type="EMBL" id="AL022023">
    <property type="protein sequence ID" value="CAA17763.1"/>
    <property type="molecule type" value="Genomic_DNA"/>
</dbReference>
<dbReference type="EMBL" id="AL161586">
    <property type="protein sequence ID" value="CAB80215.1"/>
    <property type="molecule type" value="Genomic_DNA"/>
</dbReference>
<dbReference type="EMBL" id="CP002687">
    <property type="protein sequence ID" value="AEE86443.1"/>
    <property type="molecule type" value="Genomic_DNA"/>
</dbReference>
<dbReference type="EMBL" id="AY074375">
    <property type="protein sequence ID" value="AAL67071.1"/>
    <property type="molecule type" value="mRNA"/>
</dbReference>
<dbReference type="EMBL" id="AY096357">
    <property type="protein sequence ID" value="AAM19998.1"/>
    <property type="molecule type" value="mRNA"/>
</dbReference>
<dbReference type="PIR" id="T05768">
    <property type="entry name" value="T05768"/>
</dbReference>
<dbReference type="RefSeq" id="NP_567972.1">
    <property type="nucleotide sequence ID" value="NM_119664.3"/>
</dbReference>
<dbReference type="SMR" id="O49607"/>
<dbReference type="FunCoup" id="O49607">
    <property type="interactions" value="376"/>
</dbReference>
<dbReference type="STRING" id="3702.O49607"/>
<dbReference type="MEROPS" id="S08.A39"/>
<dbReference type="GlyCosmos" id="O49607">
    <property type="glycosylation" value="2 sites, No reported glycans"/>
</dbReference>
<dbReference type="GlyGen" id="O49607">
    <property type="glycosylation" value="4 sites"/>
</dbReference>
<dbReference type="iPTMnet" id="O49607"/>
<dbReference type="PaxDb" id="3702-AT4G34980.1"/>
<dbReference type="ProMEX" id="O49607"/>
<dbReference type="ProteomicsDB" id="232957"/>
<dbReference type="EnsemblPlants" id="AT4G34980.1">
    <property type="protein sequence ID" value="AT4G34980.1"/>
    <property type="gene ID" value="AT4G34980"/>
</dbReference>
<dbReference type="GeneID" id="829650"/>
<dbReference type="Gramene" id="AT4G34980.1">
    <property type="protein sequence ID" value="AT4G34980.1"/>
    <property type="gene ID" value="AT4G34980"/>
</dbReference>
<dbReference type="KEGG" id="ath:AT4G34980"/>
<dbReference type="Araport" id="AT4G34980"/>
<dbReference type="TAIR" id="AT4G34980">
    <property type="gene designation" value="SLP2"/>
</dbReference>
<dbReference type="eggNOG" id="ENOG502QPQR">
    <property type="taxonomic scope" value="Eukaryota"/>
</dbReference>
<dbReference type="HOGENOM" id="CLU_000625_4_6_1"/>
<dbReference type="InParanoid" id="O49607"/>
<dbReference type="OMA" id="IEVVTHK"/>
<dbReference type="OrthoDB" id="206201at2759"/>
<dbReference type="PhylomeDB" id="O49607"/>
<dbReference type="PRO" id="PR:O49607"/>
<dbReference type="Proteomes" id="UP000006548">
    <property type="component" value="Chromosome 4"/>
</dbReference>
<dbReference type="ExpressionAtlas" id="O49607">
    <property type="expression patterns" value="baseline and differential"/>
</dbReference>
<dbReference type="GO" id="GO:0005886">
    <property type="term" value="C:plasma membrane"/>
    <property type="evidence" value="ECO:0007005"/>
    <property type="project" value="TAIR"/>
</dbReference>
<dbReference type="GO" id="GO:0004252">
    <property type="term" value="F:serine-type endopeptidase activity"/>
    <property type="evidence" value="ECO:0007669"/>
    <property type="project" value="InterPro"/>
</dbReference>
<dbReference type="GO" id="GO:0008236">
    <property type="term" value="F:serine-type peptidase activity"/>
    <property type="evidence" value="ECO:0000250"/>
    <property type="project" value="TAIR"/>
</dbReference>
<dbReference type="GO" id="GO:0009827">
    <property type="term" value="P:plant-type cell wall modification"/>
    <property type="evidence" value="ECO:0000304"/>
    <property type="project" value="TAIR"/>
</dbReference>
<dbReference type="GO" id="GO:0006508">
    <property type="term" value="P:proteolysis"/>
    <property type="evidence" value="ECO:0007669"/>
    <property type="project" value="UniProtKB-KW"/>
</dbReference>
<dbReference type="CDD" id="cd02120">
    <property type="entry name" value="PA_subtilisin_like"/>
    <property type="match status" value="1"/>
</dbReference>
<dbReference type="CDD" id="cd04852">
    <property type="entry name" value="Peptidases_S8_3"/>
    <property type="match status" value="1"/>
</dbReference>
<dbReference type="FunFam" id="2.60.40.2310:FF:000001">
    <property type="entry name" value="Subtilisin-like protease SBT1.5"/>
    <property type="match status" value="1"/>
</dbReference>
<dbReference type="FunFam" id="3.40.50.200:FF:000006">
    <property type="entry name" value="Subtilisin-like protease SBT1.5"/>
    <property type="match status" value="1"/>
</dbReference>
<dbReference type="FunFam" id="3.50.30.30:FF:000005">
    <property type="entry name" value="subtilisin-like protease SBT1.5"/>
    <property type="match status" value="1"/>
</dbReference>
<dbReference type="Gene3D" id="2.60.40.2310">
    <property type="match status" value="1"/>
</dbReference>
<dbReference type="Gene3D" id="3.50.30.30">
    <property type="match status" value="1"/>
</dbReference>
<dbReference type="Gene3D" id="3.30.70.80">
    <property type="entry name" value="Peptidase S8 propeptide/proteinase inhibitor I9"/>
    <property type="match status" value="1"/>
</dbReference>
<dbReference type="Gene3D" id="3.40.50.200">
    <property type="entry name" value="Peptidase S8/S53 domain"/>
    <property type="match status" value="1"/>
</dbReference>
<dbReference type="InterPro" id="IPR046450">
    <property type="entry name" value="PA_dom_sf"/>
</dbReference>
<dbReference type="InterPro" id="IPR003137">
    <property type="entry name" value="PA_domain"/>
</dbReference>
<dbReference type="InterPro" id="IPR000209">
    <property type="entry name" value="Peptidase_S8/S53_dom"/>
</dbReference>
<dbReference type="InterPro" id="IPR036852">
    <property type="entry name" value="Peptidase_S8/S53_dom_sf"/>
</dbReference>
<dbReference type="InterPro" id="IPR023828">
    <property type="entry name" value="Peptidase_S8_Ser-AS"/>
</dbReference>
<dbReference type="InterPro" id="IPR015500">
    <property type="entry name" value="Peptidase_S8_subtilisin-rel"/>
</dbReference>
<dbReference type="InterPro" id="IPR034197">
    <property type="entry name" value="Peptidases_S8_3"/>
</dbReference>
<dbReference type="InterPro" id="IPR010259">
    <property type="entry name" value="S8pro/Inhibitor_I9"/>
</dbReference>
<dbReference type="InterPro" id="IPR037045">
    <property type="entry name" value="S8pro/Inhibitor_I9_sf"/>
</dbReference>
<dbReference type="InterPro" id="IPR045051">
    <property type="entry name" value="SBT"/>
</dbReference>
<dbReference type="InterPro" id="IPR041469">
    <property type="entry name" value="Subtilisin-like_FN3"/>
</dbReference>
<dbReference type="PANTHER" id="PTHR10795">
    <property type="entry name" value="PROPROTEIN CONVERTASE SUBTILISIN/KEXIN"/>
    <property type="match status" value="1"/>
</dbReference>
<dbReference type="Pfam" id="PF17766">
    <property type="entry name" value="fn3_6"/>
    <property type="match status" value="1"/>
</dbReference>
<dbReference type="Pfam" id="PF05922">
    <property type="entry name" value="Inhibitor_I9"/>
    <property type="match status" value="1"/>
</dbReference>
<dbReference type="Pfam" id="PF02225">
    <property type="entry name" value="PA"/>
    <property type="match status" value="1"/>
</dbReference>
<dbReference type="Pfam" id="PF00082">
    <property type="entry name" value="Peptidase_S8"/>
    <property type="match status" value="1"/>
</dbReference>
<dbReference type="PRINTS" id="PR00723">
    <property type="entry name" value="SUBTILISIN"/>
</dbReference>
<dbReference type="SUPFAM" id="SSF52025">
    <property type="entry name" value="PA domain"/>
    <property type="match status" value="1"/>
</dbReference>
<dbReference type="SUPFAM" id="SSF52743">
    <property type="entry name" value="Subtilisin-like"/>
    <property type="match status" value="1"/>
</dbReference>
<dbReference type="PROSITE" id="PS51892">
    <property type="entry name" value="SUBTILASE"/>
    <property type="match status" value="1"/>
</dbReference>
<dbReference type="PROSITE" id="PS00138">
    <property type="entry name" value="SUBTILASE_SER"/>
    <property type="match status" value="1"/>
</dbReference>
<accession>O49607</accession>
<organism>
    <name type="scientific">Arabidopsis thaliana</name>
    <name type="common">Mouse-ear cress</name>
    <dbReference type="NCBI Taxonomy" id="3702"/>
    <lineage>
        <taxon>Eukaryota</taxon>
        <taxon>Viridiplantae</taxon>
        <taxon>Streptophyta</taxon>
        <taxon>Embryophyta</taxon>
        <taxon>Tracheophyta</taxon>
        <taxon>Spermatophyta</taxon>
        <taxon>Magnoliopsida</taxon>
        <taxon>eudicotyledons</taxon>
        <taxon>Gunneridae</taxon>
        <taxon>Pentapetalae</taxon>
        <taxon>rosids</taxon>
        <taxon>malvids</taxon>
        <taxon>Brassicales</taxon>
        <taxon>Brassicaceae</taxon>
        <taxon>Camelineae</taxon>
        <taxon>Arabidopsis</taxon>
    </lineage>
</organism>
<proteinExistence type="evidence at transcript level"/>
<name>SBT16_ARATH</name>
<feature type="signal peptide" evidence="1">
    <location>
        <begin position="1"/>
        <end position="20"/>
    </location>
</feature>
<feature type="chain" id="PRO_0000431965" description="Subtilisin-like protease SBT1.6" evidence="1">
    <location>
        <begin position="21"/>
        <end position="764"/>
    </location>
</feature>
<feature type="domain" description="Inhibitor I9" evidence="1">
    <location>
        <begin position="46"/>
        <end position="99"/>
    </location>
</feature>
<feature type="domain" description="Peptidase S8" evidence="3">
    <location>
        <begin position="103"/>
        <end position="606"/>
    </location>
</feature>
<feature type="domain" description="PA" evidence="1">
    <location>
        <begin position="377"/>
        <end position="457"/>
    </location>
</feature>
<feature type="active site" description="Charge relay system" evidence="3">
    <location>
        <position position="131"/>
    </location>
</feature>
<feature type="active site" description="Charge relay system" evidence="3">
    <location>
        <position position="205"/>
    </location>
</feature>
<feature type="active site" description="Charge relay system" evidence="3">
    <location>
        <position position="538"/>
    </location>
</feature>
<feature type="glycosylation site" description="N-linked (GlcNAc...) asparagine" evidence="2">
    <location>
        <position position="191"/>
    </location>
</feature>
<feature type="glycosylation site" description="N-linked (GlcNAc...) asparagine" evidence="2">
    <location>
        <position position="578"/>
    </location>
</feature>
<comment type="tissue specificity">
    <text evidence="4">Expressed in roots, leaves and flowers of mature plants.</text>
</comment>
<comment type="induction">
    <text evidence="4">By methyl jasmonate.</text>
</comment>
<comment type="similarity">
    <text evidence="7">Belongs to the peptidase S8 family.</text>
</comment>
<reference key="1">
    <citation type="journal article" date="1999" name="Nature">
        <title>Sequence and analysis of chromosome 4 of the plant Arabidopsis thaliana.</title>
        <authorList>
            <person name="Mayer K.F.X."/>
            <person name="Schueller C."/>
            <person name="Wambutt R."/>
            <person name="Murphy G."/>
            <person name="Volckaert G."/>
            <person name="Pohl T."/>
            <person name="Duesterhoeft A."/>
            <person name="Stiekema W."/>
            <person name="Entian K.-D."/>
            <person name="Terryn N."/>
            <person name="Harris B."/>
            <person name="Ansorge W."/>
            <person name="Brandt P."/>
            <person name="Grivell L.A."/>
            <person name="Rieger M."/>
            <person name="Weichselgartner M."/>
            <person name="de Simone V."/>
            <person name="Obermaier B."/>
            <person name="Mache R."/>
            <person name="Mueller M."/>
            <person name="Kreis M."/>
            <person name="Delseny M."/>
            <person name="Puigdomenech P."/>
            <person name="Watson M."/>
            <person name="Schmidtheini T."/>
            <person name="Reichert B."/>
            <person name="Portetelle D."/>
            <person name="Perez-Alonso M."/>
            <person name="Boutry M."/>
            <person name="Bancroft I."/>
            <person name="Vos P."/>
            <person name="Hoheisel J."/>
            <person name="Zimmermann W."/>
            <person name="Wedler H."/>
            <person name="Ridley P."/>
            <person name="Langham S.-A."/>
            <person name="McCullagh B."/>
            <person name="Bilham L."/>
            <person name="Robben J."/>
            <person name="van der Schueren J."/>
            <person name="Grymonprez B."/>
            <person name="Chuang Y.-J."/>
            <person name="Vandenbussche F."/>
            <person name="Braeken M."/>
            <person name="Weltjens I."/>
            <person name="Voet M."/>
            <person name="Bastiaens I."/>
            <person name="Aert R."/>
            <person name="Defoor E."/>
            <person name="Weitzenegger T."/>
            <person name="Bothe G."/>
            <person name="Ramsperger U."/>
            <person name="Hilbert H."/>
            <person name="Braun M."/>
            <person name="Holzer E."/>
            <person name="Brandt A."/>
            <person name="Peters S."/>
            <person name="van Staveren M."/>
            <person name="Dirkse W."/>
            <person name="Mooijman P."/>
            <person name="Klein Lankhorst R."/>
            <person name="Rose M."/>
            <person name="Hauf J."/>
            <person name="Koetter P."/>
            <person name="Berneiser S."/>
            <person name="Hempel S."/>
            <person name="Feldpausch M."/>
            <person name="Lamberth S."/>
            <person name="Van den Daele H."/>
            <person name="De Keyser A."/>
            <person name="Buysshaert C."/>
            <person name="Gielen J."/>
            <person name="Villarroel R."/>
            <person name="De Clercq R."/>
            <person name="van Montagu M."/>
            <person name="Rogers J."/>
            <person name="Cronin A."/>
            <person name="Quail M.A."/>
            <person name="Bray-Allen S."/>
            <person name="Clark L."/>
            <person name="Doggett J."/>
            <person name="Hall S."/>
            <person name="Kay M."/>
            <person name="Lennard N."/>
            <person name="McLay K."/>
            <person name="Mayes R."/>
            <person name="Pettett A."/>
            <person name="Rajandream M.A."/>
            <person name="Lyne M."/>
            <person name="Benes V."/>
            <person name="Rechmann S."/>
            <person name="Borkova D."/>
            <person name="Bloecker H."/>
            <person name="Scharfe M."/>
            <person name="Grimm M."/>
            <person name="Loehnert T.-H."/>
            <person name="Dose S."/>
            <person name="de Haan M."/>
            <person name="Maarse A.C."/>
            <person name="Schaefer M."/>
            <person name="Mueller-Auer S."/>
            <person name="Gabel C."/>
            <person name="Fuchs M."/>
            <person name="Fartmann B."/>
            <person name="Granderath K."/>
            <person name="Dauner D."/>
            <person name="Herzl A."/>
            <person name="Neumann S."/>
            <person name="Argiriou A."/>
            <person name="Vitale D."/>
            <person name="Liguori R."/>
            <person name="Piravandi E."/>
            <person name="Massenet O."/>
            <person name="Quigley F."/>
            <person name="Clabauld G."/>
            <person name="Muendlein A."/>
            <person name="Felber R."/>
            <person name="Schnabl S."/>
            <person name="Hiller R."/>
            <person name="Schmidt W."/>
            <person name="Lecharny A."/>
            <person name="Aubourg S."/>
            <person name="Chefdor F."/>
            <person name="Cooke R."/>
            <person name="Berger C."/>
            <person name="Monfort A."/>
            <person name="Casacuberta E."/>
            <person name="Gibbons T."/>
            <person name="Weber N."/>
            <person name="Vandenbol M."/>
            <person name="Bargues M."/>
            <person name="Terol J."/>
            <person name="Torres A."/>
            <person name="Perez-Perez A."/>
            <person name="Purnelle B."/>
            <person name="Bent E."/>
            <person name="Johnson S."/>
            <person name="Tacon D."/>
            <person name="Jesse T."/>
            <person name="Heijnen L."/>
            <person name="Schwarz S."/>
            <person name="Scholler P."/>
            <person name="Heber S."/>
            <person name="Francs P."/>
            <person name="Bielke C."/>
            <person name="Frishman D."/>
            <person name="Haase D."/>
            <person name="Lemcke K."/>
            <person name="Mewes H.-W."/>
            <person name="Stocker S."/>
            <person name="Zaccaria P."/>
            <person name="Bevan M."/>
            <person name="Wilson R.K."/>
            <person name="de la Bastide M."/>
            <person name="Habermann K."/>
            <person name="Parnell L."/>
            <person name="Dedhia N."/>
            <person name="Gnoj L."/>
            <person name="Schutz K."/>
            <person name="Huang E."/>
            <person name="Spiegel L."/>
            <person name="Sekhon M."/>
            <person name="Murray J."/>
            <person name="Sheet P."/>
            <person name="Cordes M."/>
            <person name="Abu-Threideh J."/>
            <person name="Stoneking T."/>
            <person name="Kalicki J."/>
            <person name="Graves T."/>
            <person name="Harmon G."/>
            <person name="Edwards J."/>
            <person name="Latreille P."/>
            <person name="Courtney L."/>
            <person name="Cloud J."/>
            <person name="Abbott A."/>
            <person name="Scott K."/>
            <person name="Johnson D."/>
            <person name="Minx P."/>
            <person name="Bentley D."/>
            <person name="Fulton B."/>
            <person name="Miller N."/>
            <person name="Greco T."/>
            <person name="Kemp K."/>
            <person name="Kramer J."/>
            <person name="Fulton L."/>
            <person name="Mardis E."/>
            <person name="Dante M."/>
            <person name="Pepin K."/>
            <person name="Hillier L.W."/>
            <person name="Nelson J."/>
            <person name="Spieth J."/>
            <person name="Ryan E."/>
            <person name="Andrews S."/>
            <person name="Geisel C."/>
            <person name="Layman D."/>
            <person name="Du H."/>
            <person name="Ali J."/>
            <person name="Berghoff A."/>
            <person name="Jones K."/>
            <person name="Drone K."/>
            <person name="Cotton M."/>
            <person name="Joshu C."/>
            <person name="Antonoiu B."/>
            <person name="Zidanic M."/>
            <person name="Strong C."/>
            <person name="Sun H."/>
            <person name="Lamar B."/>
            <person name="Yordan C."/>
            <person name="Ma P."/>
            <person name="Zhong J."/>
            <person name="Preston R."/>
            <person name="Vil D."/>
            <person name="Shekher M."/>
            <person name="Matero A."/>
            <person name="Shah R."/>
            <person name="Swaby I.K."/>
            <person name="O'Shaughnessy A."/>
            <person name="Rodriguez M."/>
            <person name="Hoffman J."/>
            <person name="Till S."/>
            <person name="Granat S."/>
            <person name="Shohdy N."/>
            <person name="Hasegawa A."/>
            <person name="Hameed A."/>
            <person name="Lodhi M."/>
            <person name="Johnson A."/>
            <person name="Chen E."/>
            <person name="Marra M.A."/>
            <person name="Martienssen R."/>
            <person name="McCombie W.R."/>
        </authorList>
    </citation>
    <scope>NUCLEOTIDE SEQUENCE [LARGE SCALE GENOMIC DNA]</scope>
    <source>
        <strain>cv. Columbia</strain>
    </source>
</reference>
<reference key="2">
    <citation type="journal article" date="2017" name="Plant J.">
        <title>Araport11: a complete reannotation of the Arabidopsis thaliana reference genome.</title>
        <authorList>
            <person name="Cheng C.Y."/>
            <person name="Krishnakumar V."/>
            <person name="Chan A.P."/>
            <person name="Thibaud-Nissen F."/>
            <person name="Schobel S."/>
            <person name="Town C.D."/>
        </authorList>
    </citation>
    <scope>GENOME REANNOTATION</scope>
    <source>
        <strain>cv. Columbia</strain>
    </source>
</reference>
<reference key="3">
    <citation type="journal article" date="2003" name="Science">
        <title>Empirical analysis of transcriptional activity in the Arabidopsis genome.</title>
        <authorList>
            <person name="Yamada K."/>
            <person name="Lim J."/>
            <person name="Dale J.M."/>
            <person name="Chen H."/>
            <person name="Shinn P."/>
            <person name="Palm C.J."/>
            <person name="Southwick A.M."/>
            <person name="Wu H.C."/>
            <person name="Kim C.J."/>
            <person name="Nguyen M."/>
            <person name="Pham P.K."/>
            <person name="Cheuk R.F."/>
            <person name="Karlin-Newmann G."/>
            <person name="Liu S.X."/>
            <person name="Lam B."/>
            <person name="Sakano H."/>
            <person name="Wu T."/>
            <person name="Yu G."/>
            <person name="Miranda M."/>
            <person name="Quach H.L."/>
            <person name="Tripp M."/>
            <person name="Chang C.H."/>
            <person name="Lee J.M."/>
            <person name="Toriumi M.J."/>
            <person name="Chan M.M."/>
            <person name="Tang C.C."/>
            <person name="Onodera C.S."/>
            <person name="Deng J.M."/>
            <person name="Akiyama K."/>
            <person name="Ansari Y."/>
            <person name="Arakawa T."/>
            <person name="Banh J."/>
            <person name="Banno F."/>
            <person name="Bowser L."/>
            <person name="Brooks S.Y."/>
            <person name="Carninci P."/>
            <person name="Chao Q."/>
            <person name="Choy N."/>
            <person name="Enju A."/>
            <person name="Goldsmith A.D."/>
            <person name="Gurjal M."/>
            <person name="Hansen N.F."/>
            <person name="Hayashizaki Y."/>
            <person name="Johnson-Hopson C."/>
            <person name="Hsuan V.W."/>
            <person name="Iida K."/>
            <person name="Karnes M."/>
            <person name="Khan S."/>
            <person name="Koesema E."/>
            <person name="Ishida J."/>
            <person name="Jiang P.X."/>
            <person name="Jones T."/>
            <person name="Kawai J."/>
            <person name="Kamiya A."/>
            <person name="Meyers C."/>
            <person name="Nakajima M."/>
            <person name="Narusaka M."/>
            <person name="Seki M."/>
            <person name="Sakurai T."/>
            <person name="Satou M."/>
            <person name="Tamse R."/>
            <person name="Vaysberg M."/>
            <person name="Wallender E.K."/>
            <person name="Wong C."/>
            <person name="Yamamura Y."/>
            <person name="Yuan S."/>
            <person name="Shinozaki K."/>
            <person name="Davis R.W."/>
            <person name="Theologis A."/>
            <person name="Ecker J.R."/>
        </authorList>
    </citation>
    <scope>NUCLEOTIDE SEQUENCE [LARGE SCALE MRNA]</scope>
    <source>
        <strain>cv. Columbia</strain>
    </source>
</reference>
<reference key="4">
    <citation type="journal article" date="2003" name="Physiol. Plantarum">
        <title>Expression of subtilisin-like serine proteases in Arabidopsis thaliana is cell-specific and responds to jasmonic acid and heavy metals with developmental differences.</title>
        <authorList>
            <person name="Golldack D."/>
            <person name="Vera P."/>
            <person name="Dietz K.J."/>
        </authorList>
    </citation>
    <scope>TISSUE SPECIFICITY</scope>
    <scope>INDUCTION BY METHYL JASMONATE</scope>
</reference>
<reference key="5">
    <citation type="journal article" date="2005" name="PLoS Comput. Biol.">
        <title>Inferring hypotheses on functional relationships of genes: Analysis of the Arabidopsis thaliana subtilase gene family.</title>
        <authorList>
            <person name="Rautengarten C."/>
            <person name="Steinhauser D."/>
            <person name="Bussis D."/>
            <person name="Stintzi A."/>
            <person name="Schaller A."/>
            <person name="Kopka J."/>
            <person name="Altmann T."/>
        </authorList>
    </citation>
    <scope>GENE FAMILY</scope>
    <scope>NOMENCLATURE</scope>
</reference>
<evidence type="ECO:0000255" key="1"/>
<evidence type="ECO:0000255" key="2">
    <source>
        <dbReference type="PROSITE-ProRule" id="PRU00498"/>
    </source>
</evidence>
<evidence type="ECO:0000255" key="3">
    <source>
        <dbReference type="PROSITE-ProRule" id="PRU01240"/>
    </source>
</evidence>
<evidence type="ECO:0000269" key="4">
    <source>
    </source>
</evidence>
<evidence type="ECO:0000303" key="5">
    <source>
    </source>
</evidence>
<evidence type="ECO:0000303" key="6">
    <source>
    </source>
</evidence>
<evidence type="ECO:0000305" key="7"/>
<evidence type="ECO:0000312" key="8">
    <source>
        <dbReference type="Araport" id="AT4G34980"/>
    </source>
</evidence>
<evidence type="ECO:0000312" key="9">
    <source>
        <dbReference type="EMBL" id="CAA17763.1"/>
    </source>
</evidence>
<gene>
    <name evidence="6" type="primary">SBT1.6</name>
    <name evidence="5" type="synonym">SLP2</name>
    <name evidence="8" type="ordered locus">At4g34980</name>
    <name evidence="9" type="ORF">M4E13.40</name>
</gene>
<sequence>MASSTIVLLLFLSFPFISFAASQAAKTFIFRIDGGSMPSIFPTHYHWYSTEFAEESRIVHVYHTVFHGFSAVVTPDEADNLRNHPAVLAVFEDRRRELHTTRSPQFLGLQNQKGLWSESDYGSDVIIGVFDTGIWPERRSFSDLNLGPIPKRWRGVCESGARFSPRNCNRKIIGARFFAKGQQAAVIGGINKTVEFLSPRDADGHGTHTSSTAAGRHAFKASMSGYASGVAKGVAPKARIAAYKVCWKDSGCLDSDILAAFDAAVRDGVDVISISIGGGDGITSPYYLDPIAIGSYGAASKGIFVSSSAGNEGPNGMSVTNLAPWVTTVGASTIDRNFPADAILGDGHRLRGVSLYAGVPLNGRMFPVVYPGKSGMSSASLCMENTLDPKQVRGKIVICDRGSSPRVAKGLVVKKAGGVGMILANGASNGEGLVGDAHLIPACAVGSNEGDRIKAYASSHPNPIASIDFRGTIVGIKPAPVIASFSGRGPNGLSPEILKPDLIAPGVNILAAWTDAVGPTGLPSDPRKTEFNILSGTSMACPHVSGAAALLKSAHPDWSPAVIRSAMMTTTNLVDNSNRSLIDESTGKSATPYDYGSGHLNLGRAMNPGLVYDITNDDYITFLCSIGYGPKTIQVITRTPVRCPTTRKPSPGNLNYPSITAVFPTNRRGLVSKTVIRTATNVGQAEAVYRARIESPRGVTVTVKPPRLVFTSAVKRRSYAVTVTVNTRNVVLGETGAVFGSVTWFDGGKHVVRSPIVVTQMDTL</sequence>